<accession>P66179</accession>
<accession>Q9A1W6</accession>
<keyword id="KW-0687">Ribonucleoprotein</keyword>
<keyword id="KW-0689">Ribosomal protein</keyword>
<protein>
    <recommendedName>
        <fullName evidence="1">Large ribosomal subunit protein uL29</fullName>
    </recommendedName>
    <alternativeName>
        <fullName evidence="2">50S ribosomal protein L29</fullName>
    </alternativeName>
</protein>
<proteinExistence type="inferred from homology"/>
<comment type="similarity">
    <text evidence="1">Belongs to the universal ribosomal protein uL29 family.</text>
</comment>
<reference key="1">
    <citation type="journal article" date="2002" name="Mol. Microbiol.">
        <title>Genome sequence of Streptococcus agalactiae, a pathogen causing invasive neonatal disease.</title>
        <authorList>
            <person name="Glaser P."/>
            <person name="Rusniok C."/>
            <person name="Buchrieser C."/>
            <person name="Chevalier F."/>
            <person name="Frangeul L."/>
            <person name="Msadek T."/>
            <person name="Zouine M."/>
            <person name="Couve E."/>
            <person name="Lalioui L."/>
            <person name="Poyart C."/>
            <person name="Trieu-Cuot P."/>
            <person name="Kunst F."/>
        </authorList>
    </citation>
    <scope>NUCLEOTIDE SEQUENCE [LARGE SCALE GENOMIC DNA]</scope>
    <source>
        <strain>NEM316</strain>
    </source>
</reference>
<sequence>MKLQEIKDFVKELRGLSQEELAKKENELKKELFDLRFQAAAGQLEKTARLDEVKKQIARVKTVQSEMK</sequence>
<name>RL29_STRA3</name>
<organism>
    <name type="scientific">Streptococcus agalactiae serotype III (strain NEM316)</name>
    <dbReference type="NCBI Taxonomy" id="211110"/>
    <lineage>
        <taxon>Bacteria</taxon>
        <taxon>Bacillati</taxon>
        <taxon>Bacillota</taxon>
        <taxon>Bacilli</taxon>
        <taxon>Lactobacillales</taxon>
        <taxon>Streptococcaceae</taxon>
        <taxon>Streptococcus</taxon>
    </lineage>
</organism>
<feature type="chain" id="PRO_0000130463" description="Large ribosomal subunit protein uL29">
    <location>
        <begin position="1"/>
        <end position="68"/>
    </location>
</feature>
<gene>
    <name evidence="1" type="primary">rpmC</name>
    <name type="ordered locus">gbs0066</name>
</gene>
<evidence type="ECO:0000255" key="1">
    <source>
        <dbReference type="HAMAP-Rule" id="MF_00374"/>
    </source>
</evidence>
<evidence type="ECO:0000305" key="2"/>
<dbReference type="EMBL" id="AL766843">
    <property type="protein sequence ID" value="CAD45711.1"/>
    <property type="molecule type" value="Genomic_DNA"/>
</dbReference>
<dbReference type="RefSeq" id="WP_000775731.1">
    <property type="nucleotide sequence ID" value="NC_004368.1"/>
</dbReference>
<dbReference type="SMR" id="P66179"/>
<dbReference type="GeneID" id="69900034"/>
<dbReference type="KEGG" id="san:rpmC"/>
<dbReference type="eggNOG" id="COG0255">
    <property type="taxonomic scope" value="Bacteria"/>
</dbReference>
<dbReference type="HOGENOM" id="CLU_158491_5_2_9"/>
<dbReference type="Proteomes" id="UP000000823">
    <property type="component" value="Chromosome"/>
</dbReference>
<dbReference type="GO" id="GO:0022625">
    <property type="term" value="C:cytosolic large ribosomal subunit"/>
    <property type="evidence" value="ECO:0007669"/>
    <property type="project" value="TreeGrafter"/>
</dbReference>
<dbReference type="GO" id="GO:0003735">
    <property type="term" value="F:structural constituent of ribosome"/>
    <property type="evidence" value="ECO:0007669"/>
    <property type="project" value="InterPro"/>
</dbReference>
<dbReference type="GO" id="GO:0006412">
    <property type="term" value="P:translation"/>
    <property type="evidence" value="ECO:0007669"/>
    <property type="project" value="UniProtKB-UniRule"/>
</dbReference>
<dbReference type="CDD" id="cd00427">
    <property type="entry name" value="Ribosomal_L29_HIP"/>
    <property type="match status" value="1"/>
</dbReference>
<dbReference type="FunFam" id="1.10.287.310:FF:000001">
    <property type="entry name" value="50S ribosomal protein L29"/>
    <property type="match status" value="1"/>
</dbReference>
<dbReference type="Gene3D" id="1.10.287.310">
    <property type="match status" value="1"/>
</dbReference>
<dbReference type="HAMAP" id="MF_00374">
    <property type="entry name" value="Ribosomal_uL29"/>
    <property type="match status" value="1"/>
</dbReference>
<dbReference type="InterPro" id="IPR050063">
    <property type="entry name" value="Ribosomal_protein_uL29"/>
</dbReference>
<dbReference type="InterPro" id="IPR001854">
    <property type="entry name" value="Ribosomal_uL29"/>
</dbReference>
<dbReference type="InterPro" id="IPR018254">
    <property type="entry name" value="Ribosomal_uL29_CS"/>
</dbReference>
<dbReference type="InterPro" id="IPR036049">
    <property type="entry name" value="Ribosomal_uL29_sf"/>
</dbReference>
<dbReference type="NCBIfam" id="TIGR00012">
    <property type="entry name" value="L29"/>
    <property type="match status" value="1"/>
</dbReference>
<dbReference type="PANTHER" id="PTHR10916">
    <property type="entry name" value="60S RIBOSOMAL PROTEIN L35/50S RIBOSOMAL PROTEIN L29"/>
    <property type="match status" value="1"/>
</dbReference>
<dbReference type="PANTHER" id="PTHR10916:SF0">
    <property type="entry name" value="LARGE RIBOSOMAL SUBUNIT PROTEIN UL29C"/>
    <property type="match status" value="1"/>
</dbReference>
<dbReference type="Pfam" id="PF00831">
    <property type="entry name" value="Ribosomal_L29"/>
    <property type="match status" value="1"/>
</dbReference>
<dbReference type="SUPFAM" id="SSF46561">
    <property type="entry name" value="Ribosomal protein L29 (L29p)"/>
    <property type="match status" value="1"/>
</dbReference>
<dbReference type="PROSITE" id="PS00579">
    <property type="entry name" value="RIBOSOMAL_L29"/>
    <property type="match status" value="1"/>
</dbReference>